<feature type="chain" id="PRO_0000125025" description="Large ribosomal subunit protein uL5">
    <location>
        <begin position="1"/>
        <end position="179"/>
    </location>
</feature>
<keyword id="KW-0687">Ribonucleoprotein</keyword>
<keyword id="KW-0689">Ribosomal protein</keyword>
<keyword id="KW-0694">RNA-binding</keyword>
<keyword id="KW-0699">rRNA-binding</keyword>
<keyword id="KW-0820">tRNA-binding</keyword>
<proteinExistence type="inferred from homology"/>
<accession>Q7MPH6</accession>
<gene>
    <name evidence="1" type="primary">rplE</name>
    <name type="ordered locus">VV0387</name>
</gene>
<organism>
    <name type="scientific">Vibrio vulnificus (strain YJ016)</name>
    <dbReference type="NCBI Taxonomy" id="196600"/>
    <lineage>
        <taxon>Bacteria</taxon>
        <taxon>Pseudomonadati</taxon>
        <taxon>Pseudomonadota</taxon>
        <taxon>Gammaproteobacteria</taxon>
        <taxon>Vibrionales</taxon>
        <taxon>Vibrionaceae</taxon>
        <taxon>Vibrio</taxon>
    </lineage>
</organism>
<sequence length="179" mass="20088">MAKLHDYYKSSVVAELTKQFGYTSVMQVPRIEKITLNMGVGDAINDKKLLENAAADMATISGQKPLITKARKSVAGFKIREGYPIGCKVTLRGERMWDFMERLISIALPRVRDFRGVNAKSFDGRGNYSMGVREQIIFPEIDFDKVDRVRGLDITITTSAGTDEEGRALLAAFNFPFRK</sequence>
<evidence type="ECO:0000255" key="1">
    <source>
        <dbReference type="HAMAP-Rule" id="MF_01333"/>
    </source>
</evidence>
<evidence type="ECO:0000305" key="2"/>
<reference key="1">
    <citation type="journal article" date="2003" name="Genome Res.">
        <title>Comparative genome analysis of Vibrio vulnificus, a marine pathogen.</title>
        <authorList>
            <person name="Chen C.-Y."/>
            <person name="Wu K.-M."/>
            <person name="Chang Y.-C."/>
            <person name="Chang C.-H."/>
            <person name="Tsai H.-C."/>
            <person name="Liao T.-L."/>
            <person name="Liu Y.-M."/>
            <person name="Chen H.-J."/>
            <person name="Shen A.B.-T."/>
            <person name="Li J.-C."/>
            <person name="Su T.-L."/>
            <person name="Shao C.-P."/>
            <person name="Lee C.-T."/>
            <person name="Hor L.-I."/>
            <person name="Tsai S.-F."/>
        </authorList>
    </citation>
    <scope>NUCLEOTIDE SEQUENCE [LARGE SCALE GENOMIC DNA]</scope>
    <source>
        <strain>YJ016</strain>
    </source>
</reference>
<protein>
    <recommendedName>
        <fullName evidence="1">Large ribosomal subunit protein uL5</fullName>
    </recommendedName>
    <alternativeName>
        <fullName evidence="2">50S ribosomal protein L5</fullName>
    </alternativeName>
</protein>
<dbReference type="EMBL" id="BA000037">
    <property type="protein sequence ID" value="BAC93151.1"/>
    <property type="molecule type" value="Genomic_DNA"/>
</dbReference>
<dbReference type="RefSeq" id="WP_011078821.1">
    <property type="nucleotide sequence ID" value="NC_005139.1"/>
</dbReference>
<dbReference type="SMR" id="Q7MPH6"/>
<dbReference type="STRING" id="672.VV93_v1c03580"/>
<dbReference type="GeneID" id="93895054"/>
<dbReference type="KEGG" id="vvy:VV0387"/>
<dbReference type="eggNOG" id="COG0094">
    <property type="taxonomic scope" value="Bacteria"/>
</dbReference>
<dbReference type="HOGENOM" id="CLU_061015_2_1_6"/>
<dbReference type="Proteomes" id="UP000002675">
    <property type="component" value="Chromosome I"/>
</dbReference>
<dbReference type="GO" id="GO:1990904">
    <property type="term" value="C:ribonucleoprotein complex"/>
    <property type="evidence" value="ECO:0007669"/>
    <property type="project" value="UniProtKB-KW"/>
</dbReference>
<dbReference type="GO" id="GO:0005840">
    <property type="term" value="C:ribosome"/>
    <property type="evidence" value="ECO:0007669"/>
    <property type="project" value="UniProtKB-KW"/>
</dbReference>
<dbReference type="GO" id="GO:0019843">
    <property type="term" value="F:rRNA binding"/>
    <property type="evidence" value="ECO:0007669"/>
    <property type="project" value="UniProtKB-UniRule"/>
</dbReference>
<dbReference type="GO" id="GO:0003735">
    <property type="term" value="F:structural constituent of ribosome"/>
    <property type="evidence" value="ECO:0007669"/>
    <property type="project" value="InterPro"/>
</dbReference>
<dbReference type="GO" id="GO:0000049">
    <property type="term" value="F:tRNA binding"/>
    <property type="evidence" value="ECO:0007669"/>
    <property type="project" value="UniProtKB-UniRule"/>
</dbReference>
<dbReference type="GO" id="GO:0006412">
    <property type="term" value="P:translation"/>
    <property type="evidence" value="ECO:0007669"/>
    <property type="project" value="UniProtKB-UniRule"/>
</dbReference>
<dbReference type="FunFam" id="3.30.1440.10:FF:000001">
    <property type="entry name" value="50S ribosomal protein L5"/>
    <property type="match status" value="1"/>
</dbReference>
<dbReference type="Gene3D" id="3.30.1440.10">
    <property type="match status" value="1"/>
</dbReference>
<dbReference type="HAMAP" id="MF_01333_B">
    <property type="entry name" value="Ribosomal_uL5_B"/>
    <property type="match status" value="1"/>
</dbReference>
<dbReference type="InterPro" id="IPR002132">
    <property type="entry name" value="Ribosomal_uL5"/>
</dbReference>
<dbReference type="InterPro" id="IPR020930">
    <property type="entry name" value="Ribosomal_uL5_bac-type"/>
</dbReference>
<dbReference type="InterPro" id="IPR031309">
    <property type="entry name" value="Ribosomal_uL5_C"/>
</dbReference>
<dbReference type="InterPro" id="IPR020929">
    <property type="entry name" value="Ribosomal_uL5_CS"/>
</dbReference>
<dbReference type="InterPro" id="IPR022803">
    <property type="entry name" value="Ribosomal_uL5_dom_sf"/>
</dbReference>
<dbReference type="InterPro" id="IPR031310">
    <property type="entry name" value="Ribosomal_uL5_N"/>
</dbReference>
<dbReference type="NCBIfam" id="NF000585">
    <property type="entry name" value="PRK00010.1"/>
    <property type="match status" value="1"/>
</dbReference>
<dbReference type="PANTHER" id="PTHR11994">
    <property type="entry name" value="60S RIBOSOMAL PROTEIN L11-RELATED"/>
    <property type="match status" value="1"/>
</dbReference>
<dbReference type="Pfam" id="PF00281">
    <property type="entry name" value="Ribosomal_L5"/>
    <property type="match status" value="1"/>
</dbReference>
<dbReference type="Pfam" id="PF00673">
    <property type="entry name" value="Ribosomal_L5_C"/>
    <property type="match status" value="1"/>
</dbReference>
<dbReference type="PIRSF" id="PIRSF002161">
    <property type="entry name" value="Ribosomal_L5"/>
    <property type="match status" value="1"/>
</dbReference>
<dbReference type="SUPFAM" id="SSF55282">
    <property type="entry name" value="RL5-like"/>
    <property type="match status" value="1"/>
</dbReference>
<dbReference type="PROSITE" id="PS00358">
    <property type="entry name" value="RIBOSOMAL_L5"/>
    <property type="match status" value="1"/>
</dbReference>
<name>RL5_VIBVY</name>
<comment type="function">
    <text evidence="1">This is one of the proteins that bind and probably mediate the attachment of the 5S RNA into the large ribosomal subunit, where it forms part of the central protuberance. In the 70S ribosome it contacts protein S13 of the 30S subunit (bridge B1b), connecting the 2 subunits; this bridge is implicated in subunit movement. Contacts the P site tRNA; the 5S rRNA and some of its associated proteins might help stabilize positioning of ribosome-bound tRNAs.</text>
</comment>
<comment type="subunit">
    <text evidence="1">Part of the 50S ribosomal subunit; part of the 5S rRNA/L5/L18/L25 subcomplex. Contacts the 5S rRNA and the P site tRNA. Forms a bridge to the 30S subunit in the 70S ribosome.</text>
</comment>
<comment type="similarity">
    <text evidence="1">Belongs to the universal ribosomal protein uL5 family.</text>
</comment>